<gene>
    <name evidence="2" type="primary">infC</name>
    <name type="ordered locus">BUsg_118</name>
</gene>
<feature type="chain" id="PRO_0000177496" description="Translation initiation factor IF-3">
    <location>
        <begin position="1"/>
        <end position="179"/>
    </location>
</feature>
<feature type="site" description="Important for 30S binding" evidence="1">
    <location>
        <position position="107"/>
    </location>
</feature>
<feature type="site" description="Important for 30S binding" evidence="1">
    <location>
        <position position="110"/>
    </location>
</feature>
<feature type="sequence conflict" description="In Ref. 1; AAC43606." evidence="3" ref="1">
    <original>L</original>
    <variation>V</variation>
    <location>
        <position position="26"/>
    </location>
</feature>
<feature type="sequence conflict" description="In Ref. 1; AAC43606." evidence="3" ref="1">
    <original>ALE</original>
    <variation>LR</variation>
    <location>
        <begin position="42"/>
        <end position="44"/>
    </location>
</feature>
<name>IF3_BUCAP</name>
<comment type="function">
    <text evidence="2">IF-3 binds to the 30S ribosomal subunit and shifts the equilibrium between 70S ribosomes and their 50S and 30S subunits in favor of the free subunits, thus enhancing the availability of 30S subunits on which protein synthesis initiation begins.</text>
</comment>
<comment type="subunit">
    <text evidence="2">Monomer.</text>
</comment>
<comment type="subcellular location">
    <subcellularLocation>
        <location evidence="2">Cytoplasm</location>
    </subcellularLocation>
</comment>
<comment type="similarity">
    <text evidence="2">Belongs to the IF-3 family.</text>
</comment>
<evidence type="ECO:0000250" key="1"/>
<evidence type="ECO:0000255" key="2">
    <source>
        <dbReference type="HAMAP-Rule" id="MF_00080"/>
    </source>
</evidence>
<evidence type="ECO:0000305" key="3"/>
<dbReference type="EMBL" id="U11066">
    <property type="protein sequence ID" value="AAC43606.1"/>
    <property type="molecule type" value="Genomic_DNA"/>
</dbReference>
<dbReference type="EMBL" id="AE013218">
    <property type="status" value="NOT_ANNOTATED_CDS"/>
    <property type="molecule type" value="Genomic_DNA"/>
</dbReference>
<dbReference type="PIR" id="I40072">
    <property type="entry name" value="I40072"/>
</dbReference>
<dbReference type="RefSeq" id="WP_011053653.1">
    <property type="nucleotide sequence ID" value="NC_004061.1"/>
</dbReference>
<dbReference type="SMR" id="P46243"/>
<dbReference type="GeneID" id="93003588"/>
<dbReference type="Proteomes" id="UP000000416">
    <property type="component" value="Chromosome"/>
</dbReference>
<dbReference type="GO" id="GO:0005829">
    <property type="term" value="C:cytosol"/>
    <property type="evidence" value="ECO:0007669"/>
    <property type="project" value="TreeGrafter"/>
</dbReference>
<dbReference type="GO" id="GO:0016020">
    <property type="term" value="C:membrane"/>
    <property type="evidence" value="ECO:0007669"/>
    <property type="project" value="TreeGrafter"/>
</dbReference>
<dbReference type="GO" id="GO:0043022">
    <property type="term" value="F:ribosome binding"/>
    <property type="evidence" value="ECO:0007669"/>
    <property type="project" value="TreeGrafter"/>
</dbReference>
<dbReference type="GO" id="GO:0003743">
    <property type="term" value="F:translation initiation factor activity"/>
    <property type="evidence" value="ECO:0007669"/>
    <property type="project" value="UniProtKB-UniRule"/>
</dbReference>
<dbReference type="GO" id="GO:0032790">
    <property type="term" value="P:ribosome disassembly"/>
    <property type="evidence" value="ECO:0007669"/>
    <property type="project" value="TreeGrafter"/>
</dbReference>
<dbReference type="FunFam" id="3.10.20.80:FF:000001">
    <property type="entry name" value="Translation initiation factor IF-3"/>
    <property type="match status" value="1"/>
</dbReference>
<dbReference type="FunFam" id="3.30.110.10:FF:000001">
    <property type="entry name" value="Translation initiation factor IF-3"/>
    <property type="match status" value="1"/>
</dbReference>
<dbReference type="Gene3D" id="3.30.110.10">
    <property type="entry name" value="Translation initiation factor 3 (IF-3), C-terminal domain"/>
    <property type="match status" value="1"/>
</dbReference>
<dbReference type="Gene3D" id="3.10.20.80">
    <property type="entry name" value="Translation initiation factor 3 (IF-3), N-terminal domain"/>
    <property type="match status" value="1"/>
</dbReference>
<dbReference type="HAMAP" id="MF_00080">
    <property type="entry name" value="IF_3"/>
    <property type="match status" value="1"/>
</dbReference>
<dbReference type="InterPro" id="IPR036788">
    <property type="entry name" value="T_IF-3_C_sf"/>
</dbReference>
<dbReference type="InterPro" id="IPR036787">
    <property type="entry name" value="T_IF-3_N_sf"/>
</dbReference>
<dbReference type="InterPro" id="IPR019813">
    <property type="entry name" value="Translation_initiation_fac3_CS"/>
</dbReference>
<dbReference type="InterPro" id="IPR001288">
    <property type="entry name" value="Translation_initiation_fac_3"/>
</dbReference>
<dbReference type="InterPro" id="IPR019815">
    <property type="entry name" value="Translation_initiation_fac_3_C"/>
</dbReference>
<dbReference type="InterPro" id="IPR019814">
    <property type="entry name" value="Translation_initiation_fac_3_N"/>
</dbReference>
<dbReference type="NCBIfam" id="TIGR00168">
    <property type="entry name" value="infC"/>
    <property type="match status" value="1"/>
</dbReference>
<dbReference type="PANTHER" id="PTHR10938">
    <property type="entry name" value="TRANSLATION INITIATION FACTOR IF-3"/>
    <property type="match status" value="1"/>
</dbReference>
<dbReference type="PANTHER" id="PTHR10938:SF0">
    <property type="entry name" value="TRANSLATION INITIATION FACTOR IF-3, MITOCHONDRIAL"/>
    <property type="match status" value="1"/>
</dbReference>
<dbReference type="Pfam" id="PF00707">
    <property type="entry name" value="IF3_C"/>
    <property type="match status" value="1"/>
</dbReference>
<dbReference type="Pfam" id="PF05198">
    <property type="entry name" value="IF3_N"/>
    <property type="match status" value="1"/>
</dbReference>
<dbReference type="SUPFAM" id="SSF55200">
    <property type="entry name" value="Translation initiation factor IF3, C-terminal domain"/>
    <property type="match status" value="1"/>
</dbReference>
<dbReference type="SUPFAM" id="SSF54364">
    <property type="entry name" value="Translation initiation factor IF3, N-terminal domain"/>
    <property type="match status" value="1"/>
</dbReference>
<dbReference type="PROSITE" id="PS00938">
    <property type="entry name" value="IF3"/>
    <property type="match status" value="1"/>
</dbReference>
<sequence>MKGGKRIQFTRPNRINNEIRAIKVRLTGVEGDQIGIVNLREALEKAEELGLDLVEISPNAEPPVCRIMDYGKFLYEKSKSSKEQKKKQKVIQVKEIKFRPSTDEGDYQVKLRNLIRFLEDGDKVKITLRFRGREMAHQKIGIDVLNRVKNDLIELAIIESFPSKIEGRQMIMVLAPKKK</sequence>
<reference key="1">
    <citation type="journal article" date="1995" name="Curr. Microbiol.">
        <title>Aromatic amino acid biosynthesis in Buchnera aphidicola (endosymbiont of aphids): cloning and sequencing of a DNA fragment containing aroH-thrS-infC-rpmI-rplT.</title>
        <authorList>
            <person name="Kolibachuk D."/>
            <person name="Rouhbakhsh D."/>
            <person name="Baumann P."/>
        </authorList>
    </citation>
    <scope>NUCLEOTIDE SEQUENCE [GENOMIC DNA]</scope>
</reference>
<reference key="2">
    <citation type="journal article" date="2002" name="Science">
        <title>50 million years of genomic stasis in endosymbiotic bacteria.</title>
        <authorList>
            <person name="Tamas I."/>
            <person name="Klasson L."/>
            <person name="Canbaeck B."/>
            <person name="Naeslund A.K."/>
            <person name="Eriksson A.-S."/>
            <person name="Wernegreen J.J."/>
            <person name="Sandstroem J.P."/>
            <person name="Moran N.A."/>
            <person name="Andersson S.G.E."/>
        </authorList>
    </citation>
    <scope>NUCLEOTIDE SEQUENCE [LARGE SCALE GENOMIC DNA]</scope>
    <source>
        <strain>Sg</strain>
    </source>
</reference>
<protein>
    <recommendedName>
        <fullName evidence="2">Translation initiation factor IF-3</fullName>
    </recommendedName>
</protein>
<keyword id="KW-0963">Cytoplasm</keyword>
<keyword id="KW-0396">Initiation factor</keyword>
<keyword id="KW-0648">Protein biosynthesis</keyword>
<accession>P46243</accession>
<organism>
    <name type="scientific">Buchnera aphidicola subsp. Schizaphis graminum (strain Sg)</name>
    <dbReference type="NCBI Taxonomy" id="198804"/>
    <lineage>
        <taxon>Bacteria</taxon>
        <taxon>Pseudomonadati</taxon>
        <taxon>Pseudomonadota</taxon>
        <taxon>Gammaproteobacteria</taxon>
        <taxon>Enterobacterales</taxon>
        <taxon>Erwiniaceae</taxon>
        <taxon>Buchnera</taxon>
    </lineage>
</organism>
<proteinExistence type="inferred from homology"/>